<protein>
    <recommendedName>
        <fullName evidence="1">UPF0386 protein LHK_03186</fullName>
    </recommendedName>
</protein>
<dbReference type="EMBL" id="CP001154">
    <property type="protein sequence ID" value="ACO76164.1"/>
    <property type="molecule type" value="Genomic_DNA"/>
</dbReference>
<dbReference type="RefSeq" id="WP_012698627.1">
    <property type="nucleotide sequence ID" value="NC_012559.1"/>
</dbReference>
<dbReference type="STRING" id="557598.LHK_03186"/>
<dbReference type="KEGG" id="lhk:LHK_03186"/>
<dbReference type="eggNOG" id="COG3811">
    <property type="taxonomic scope" value="Bacteria"/>
</dbReference>
<dbReference type="HOGENOM" id="CLU_164736_0_0_4"/>
<dbReference type="Proteomes" id="UP000002010">
    <property type="component" value="Chromosome"/>
</dbReference>
<dbReference type="HAMAP" id="MF_00827">
    <property type="entry name" value="UPF0386"/>
    <property type="match status" value="1"/>
</dbReference>
<dbReference type="InterPro" id="IPR018654">
    <property type="entry name" value="YjhX_toxin"/>
</dbReference>
<dbReference type="NCBIfam" id="NF010240">
    <property type="entry name" value="PRK13687.1"/>
    <property type="match status" value="1"/>
</dbReference>
<dbReference type="Pfam" id="PF09857">
    <property type="entry name" value="YjhX_toxin"/>
    <property type="match status" value="1"/>
</dbReference>
<comment type="similarity">
    <text evidence="1">Belongs to the UPF0386 family.</text>
</comment>
<organism>
    <name type="scientific">Laribacter hongkongensis (strain HLHK9)</name>
    <dbReference type="NCBI Taxonomy" id="557598"/>
    <lineage>
        <taxon>Bacteria</taxon>
        <taxon>Pseudomonadati</taxon>
        <taxon>Pseudomonadota</taxon>
        <taxon>Betaproteobacteria</taxon>
        <taxon>Neisseriales</taxon>
        <taxon>Aquaspirillaceae</taxon>
        <taxon>Laribacter</taxon>
    </lineage>
</organism>
<proteinExistence type="inferred from homology"/>
<gene>
    <name type="ordered locus">LHK_03186</name>
</gene>
<sequence length="85" mass="9641">MNISRPEQRTLHVLAKGGYIVRIRDDAGRITTVECHTREGHILSDCTLAVFQKLKAKRLVSSKNSQPYRINRNGLLAVRAQLDNQ</sequence>
<name>Y3186_LARHH</name>
<evidence type="ECO:0000255" key="1">
    <source>
        <dbReference type="HAMAP-Rule" id="MF_00827"/>
    </source>
</evidence>
<accession>C1D6C9</accession>
<reference key="1">
    <citation type="journal article" date="2009" name="PLoS Genet.">
        <title>The complete genome and proteome of Laribacter hongkongensis reveal potential mechanisms for adaptations to different temperatures and habitats.</title>
        <authorList>
            <person name="Woo P.C.Y."/>
            <person name="Lau S.K.P."/>
            <person name="Tse H."/>
            <person name="Teng J.L.L."/>
            <person name="Curreem S.O."/>
            <person name="Tsang A.K.L."/>
            <person name="Fan R.Y.Y."/>
            <person name="Wong G.K.M."/>
            <person name="Huang Y."/>
            <person name="Loman N.J."/>
            <person name="Snyder L.A.S."/>
            <person name="Cai J.J."/>
            <person name="Huang J.-D."/>
            <person name="Mak W."/>
            <person name="Pallen M.J."/>
            <person name="Lok S."/>
            <person name="Yuen K.-Y."/>
        </authorList>
    </citation>
    <scope>NUCLEOTIDE SEQUENCE [LARGE SCALE GENOMIC DNA]</scope>
    <source>
        <strain>HLHK9</strain>
    </source>
</reference>
<feature type="chain" id="PRO_1000148769" description="UPF0386 protein LHK_03186">
    <location>
        <begin position="1"/>
        <end position="85"/>
    </location>
</feature>
<keyword id="KW-1185">Reference proteome</keyword>